<name>TORD_SHEB5</name>
<evidence type="ECO:0000255" key="1">
    <source>
        <dbReference type="HAMAP-Rule" id="MF_01150"/>
    </source>
</evidence>
<protein>
    <recommendedName>
        <fullName evidence="1">Chaperone protein TorD</fullName>
    </recommendedName>
</protein>
<reference key="1">
    <citation type="submission" date="2007-02" db="EMBL/GenBank/DDBJ databases">
        <title>Complete sequence of chromosome of Shewanella baltica OS155.</title>
        <authorList>
            <consortium name="US DOE Joint Genome Institute"/>
            <person name="Copeland A."/>
            <person name="Lucas S."/>
            <person name="Lapidus A."/>
            <person name="Barry K."/>
            <person name="Detter J.C."/>
            <person name="Glavina del Rio T."/>
            <person name="Hammon N."/>
            <person name="Israni S."/>
            <person name="Dalin E."/>
            <person name="Tice H."/>
            <person name="Pitluck S."/>
            <person name="Sims D.R."/>
            <person name="Brettin T."/>
            <person name="Bruce D."/>
            <person name="Han C."/>
            <person name="Tapia R."/>
            <person name="Brainard J."/>
            <person name="Schmutz J."/>
            <person name="Larimer F."/>
            <person name="Land M."/>
            <person name="Hauser L."/>
            <person name="Kyrpides N."/>
            <person name="Mikhailova N."/>
            <person name="Brettar I."/>
            <person name="Klappenbach J."/>
            <person name="Konstantinidis K."/>
            <person name="Rodrigues J."/>
            <person name="Tiedje J."/>
            <person name="Richardson P."/>
        </authorList>
    </citation>
    <scope>NUCLEOTIDE SEQUENCE [LARGE SCALE GENOMIC DNA]</scope>
    <source>
        <strain>OS155 / ATCC BAA-1091</strain>
    </source>
</reference>
<feature type="chain" id="PRO_1000065504" description="Chaperone protein TorD">
    <location>
        <begin position="1"/>
        <end position="209"/>
    </location>
</feature>
<sequence>MSQVDINHARALVYQLLSSLFAREVDEQRLKELTSEAAQQFWEQLSLEANFTQSVDKIRSTLNGIKDDEALLELAADYCGLFLVGTKHSASPYASLYLSGEDEPLLFGEQHQQMSEFLHQSKLQVQSHFPEPADHLAVMLAYMAHLCCHSEDSVQLSFLQTCVDSWLAKFINQLTQCHKNGFYSAVATLTLAWVKQDIAQLEPAVAVIS</sequence>
<keyword id="KW-0143">Chaperone</keyword>
<keyword id="KW-0963">Cytoplasm</keyword>
<keyword id="KW-1185">Reference proteome</keyword>
<dbReference type="EMBL" id="CP000563">
    <property type="protein sequence ID" value="ABN62694.1"/>
    <property type="molecule type" value="Genomic_DNA"/>
</dbReference>
<dbReference type="RefSeq" id="WP_011847496.1">
    <property type="nucleotide sequence ID" value="NC_009052.1"/>
</dbReference>
<dbReference type="SMR" id="A3D7I1"/>
<dbReference type="STRING" id="325240.Sbal_3214"/>
<dbReference type="KEGG" id="sbl:Sbal_3214"/>
<dbReference type="HOGENOM" id="CLU_077650_4_0_6"/>
<dbReference type="OrthoDB" id="7849731at2"/>
<dbReference type="Proteomes" id="UP000001557">
    <property type="component" value="Chromosome"/>
</dbReference>
<dbReference type="GO" id="GO:0005737">
    <property type="term" value="C:cytoplasm"/>
    <property type="evidence" value="ECO:0007669"/>
    <property type="project" value="UniProtKB-SubCell"/>
</dbReference>
<dbReference type="GO" id="GO:0051259">
    <property type="term" value="P:protein complex oligomerization"/>
    <property type="evidence" value="ECO:0007669"/>
    <property type="project" value="InterPro"/>
</dbReference>
<dbReference type="GO" id="GO:0006457">
    <property type="term" value="P:protein folding"/>
    <property type="evidence" value="ECO:0007669"/>
    <property type="project" value="UniProtKB-UniRule"/>
</dbReference>
<dbReference type="Gene3D" id="1.20.120.1820">
    <property type="match status" value="1"/>
</dbReference>
<dbReference type="Gene3D" id="1.20.1280.20">
    <property type="entry name" value="HscB, C-terminal domain"/>
    <property type="match status" value="1"/>
</dbReference>
<dbReference type="HAMAP" id="MF_01150">
    <property type="entry name" value="TorD"/>
    <property type="match status" value="1"/>
</dbReference>
<dbReference type="InterPro" id="IPR023069">
    <property type="entry name" value="Chaperone_TorD"/>
</dbReference>
<dbReference type="InterPro" id="IPR020945">
    <property type="entry name" value="DMSO/NO3_reduct_chaperone"/>
</dbReference>
<dbReference type="InterPro" id="IPR036386">
    <property type="entry name" value="HscB_C_sf"/>
</dbReference>
<dbReference type="InterPro" id="IPR036411">
    <property type="entry name" value="TorD-like_sf"/>
</dbReference>
<dbReference type="InterPro" id="IPR050289">
    <property type="entry name" value="TorD/DmsD_chaperones"/>
</dbReference>
<dbReference type="NCBIfam" id="NF003442">
    <property type="entry name" value="PRK04976.1"/>
    <property type="match status" value="1"/>
</dbReference>
<dbReference type="PANTHER" id="PTHR34227:SF11">
    <property type="entry name" value="CHAPERONE PROTEIN TORD"/>
    <property type="match status" value="1"/>
</dbReference>
<dbReference type="PANTHER" id="PTHR34227">
    <property type="entry name" value="CHAPERONE PROTEIN YCDY"/>
    <property type="match status" value="1"/>
</dbReference>
<dbReference type="Pfam" id="PF02613">
    <property type="entry name" value="Nitrate_red_del"/>
    <property type="match status" value="1"/>
</dbReference>
<dbReference type="SUPFAM" id="SSF89155">
    <property type="entry name" value="TorD-like"/>
    <property type="match status" value="1"/>
</dbReference>
<gene>
    <name evidence="1" type="primary">torD</name>
    <name type="ordered locus">Sbal_3214</name>
</gene>
<accession>A3D7I1</accession>
<organism>
    <name type="scientific">Shewanella baltica (strain OS155 / ATCC BAA-1091)</name>
    <dbReference type="NCBI Taxonomy" id="325240"/>
    <lineage>
        <taxon>Bacteria</taxon>
        <taxon>Pseudomonadati</taxon>
        <taxon>Pseudomonadota</taxon>
        <taxon>Gammaproteobacteria</taxon>
        <taxon>Alteromonadales</taxon>
        <taxon>Shewanellaceae</taxon>
        <taxon>Shewanella</taxon>
    </lineage>
</organism>
<comment type="function">
    <text evidence="1">Involved in the biogenesis of TorA. Acts on TorA before the insertion of the molybdenum cofactor and, as a result, probably favors a conformation of the apoenzyme that is competent for acquiring the cofactor.</text>
</comment>
<comment type="subcellular location">
    <subcellularLocation>
        <location evidence="1">Cytoplasm</location>
    </subcellularLocation>
</comment>
<comment type="similarity">
    <text evidence="1">Belongs to the TorD/DmsD family. TorD subfamily.</text>
</comment>
<proteinExistence type="inferred from homology"/>